<reference key="1">
    <citation type="journal article" date="2007" name="Genome Biol.">
        <title>Characterization and modeling of the Haemophilus influenzae core and supragenomes based on the complete genomic sequences of Rd and 12 clinical nontypeable strains.</title>
        <authorList>
            <person name="Hogg J.S."/>
            <person name="Hu F.Z."/>
            <person name="Janto B."/>
            <person name="Boissy R."/>
            <person name="Hayes J."/>
            <person name="Keefe R."/>
            <person name="Post J.C."/>
            <person name="Ehrlich G.D."/>
        </authorList>
    </citation>
    <scope>NUCLEOTIDE SEQUENCE [LARGE SCALE GENOMIC DNA]</scope>
    <source>
        <strain>PittEE</strain>
    </source>
</reference>
<sequence length="180" mass="19740">MTTQLDLIKSSIKSIPNYPKEGIIFRDITTLLEVPAAFKATIDLIVEQYRDKGITKVLGTESRGFIFGAPVALALGLPFELVRKPKKLPRETISQSYQLEYGQDTLEMHVDAISEGDNVLIIDDLLATGGTVEATVKLVQRLGGTVKHAAFVINLPELGGEKRLNNLGVDCYTLVNFEGH</sequence>
<evidence type="ECO:0000255" key="1">
    <source>
        <dbReference type="HAMAP-Rule" id="MF_00004"/>
    </source>
</evidence>
<name>APT_HAEIE</name>
<keyword id="KW-0963">Cytoplasm</keyword>
<keyword id="KW-0328">Glycosyltransferase</keyword>
<keyword id="KW-0660">Purine salvage</keyword>
<keyword id="KW-0808">Transferase</keyword>
<accession>A5UBP3</accession>
<feature type="chain" id="PRO_1000000291" description="Adenine phosphoribosyltransferase">
    <location>
        <begin position="1"/>
        <end position="180"/>
    </location>
</feature>
<comment type="function">
    <text evidence="1">Catalyzes a salvage reaction resulting in the formation of AMP, that is energically less costly than de novo synthesis.</text>
</comment>
<comment type="catalytic activity">
    <reaction evidence="1">
        <text>AMP + diphosphate = 5-phospho-alpha-D-ribose 1-diphosphate + adenine</text>
        <dbReference type="Rhea" id="RHEA:16609"/>
        <dbReference type="ChEBI" id="CHEBI:16708"/>
        <dbReference type="ChEBI" id="CHEBI:33019"/>
        <dbReference type="ChEBI" id="CHEBI:58017"/>
        <dbReference type="ChEBI" id="CHEBI:456215"/>
        <dbReference type="EC" id="2.4.2.7"/>
    </reaction>
</comment>
<comment type="pathway">
    <text evidence="1">Purine metabolism; AMP biosynthesis via salvage pathway; AMP from adenine: step 1/1.</text>
</comment>
<comment type="subunit">
    <text evidence="1">Homodimer.</text>
</comment>
<comment type="subcellular location">
    <subcellularLocation>
        <location evidence="1">Cytoplasm</location>
    </subcellularLocation>
</comment>
<comment type="similarity">
    <text evidence="1">Belongs to the purine/pyrimidine phosphoribosyltransferase family.</text>
</comment>
<organism>
    <name type="scientific">Haemophilus influenzae (strain PittEE)</name>
    <dbReference type="NCBI Taxonomy" id="374930"/>
    <lineage>
        <taxon>Bacteria</taxon>
        <taxon>Pseudomonadati</taxon>
        <taxon>Pseudomonadota</taxon>
        <taxon>Gammaproteobacteria</taxon>
        <taxon>Pasteurellales</taxon>
        <taxon>Pasteurellaceae</taxon>
        <taxon>Haemophilus</taxon>
    </lineage>
</organism>
<proteinExistence type="inferred from homology"/>
<protein>
    <recommendedName>
        <fullName evidence="1">Adenine phosphoribosyltransferase</fullName>
        <shortName evidence="1">APRT</shortName>
        <ecNumber evidence="1">2.4.2.7</ecNumber>
    </recommendedName>
</protein>
<gene>
    <name evidence="1" type="primary">apt</name>
    <name type="ordered locus">CGSHiEE_03885</name>
</gene>
<dbReference type="EC" id="2.4.2.7" evidence="1"/>
<dbReference type="EMBL" id="CP000671">
    <property type="protein sequence ID" value="ABQ98194.1"/>
    <property type="molecule type" value="Genomic_DNA"/>
</dbReference>
<dbReference type="SMR" id="A5UBP3"/>
<dbReference type="KEGG" id="hip:CGSHiEE_03885"/>
<dbReference type="HOGENOM" id="CLU_063339_3_0_6"/>
<dbReference type="UniPathway" id="UPA00588">
    <property type="reaction ID" value="UER00646"/>
</dbReference>
<dbReference type="GO" id="GO:0005829">
    <property type="term" value="C:cytosol"/>
    <property type="evidence" value="ECO:0007669"/>
    <property type="project" value="TreeGrafter"/>
</dbReference>
<dbReference type="GO" id="GO:0003999">
    <property type="term" value="F:adenine phosphoribosyltransferase activity"/>
    <property type="evidence" value="ECO:0007669"/>
    <property type="project" value="UniProtKB-UniRule"/>
</dbReference>
<dbReference type="GO" id="GO:0006168">
    <property type="term" value="P:adenine salvage"/>
    <property type="evidence" value="ECO:0007669"/>
    <property type="project" value="InterPro"/>
</dbReference>
<dbReference type="GO" id="GO:0044209">
    <property type="term" value="P:AMP salvage"/>
    <property type="evidence" value="ECO:0007669"/>
    <property type="project" value="UniProtKB-UniRule"/>
</dbReference>
<dbReference type="GO" id="GO:0006166">
    <property type="term" value="P:purine ribonucleoside salvage"/>
    <property type="evidence" value="ECO:0007669"/>
    <property type="project" value="UniProtKB-KW"/>
</dbReference>
<dbReference type="CDD" id="cd06223">
    <property type="entry name" value="PRTases_typeI"/>
    <property type="match status" value="1"/>
</dbReference>
<dbReference type="FunFam" id="3.40.50.2020:FF:000004">
    <property type="entry name" value="Adenine phosphoribosyltransferase"/>
    <property type="match status" value="1"/>
</dbReference>
<dbReference type="Gene3D" id="3.40.50.2020">
    <property type="match status" value="1"/>
</dbReference>
<dbReference type="HAMAP" id="MF_00004">
    <property type="entry name" value="Aden_phosphoribosyltr"/>
    <property type="match status" value="1"/>
</dbReference>
<dbReference type="InterPro" id="IPR005764">
    <property type="entry name" value="Ade_phspho_trans"/>
</dbReference>
<dbReference type="InterPro" id="IPR050120">
    <property type="entry name" value="Adenine_PRTase"/>
</dbReference>
<dbReference type="InterPro" id="IPR000836">
    <property type="entry name" value="PRibTrfase_dom"/>
</dbReference>
<dbReference type="InterPro" id="IPR029057">
    <property type="entry name" value="PRTase-like"/>
</dbReference>
<dbReference type="NCBIfam" id="TIGR01090">
    <property type="entry name" value="apt"/>
    <property type="match status" value="1"/>
</dbReference>
<dbReference type="NCBIfam" id="NF002632">
    <property type="entry name" value="PRK02304.1-1"/>
    <property type="match status" value="1"/>
</dbReference>
<dbReference type="NCBIfam" id="NF002634">
    <property type="entry name" value="PRK02304.1-3"/>
    <property type="match status" value="1"/>
</dbReference>
<dbReference type="NCBIfam" id="NF002636">
    <property type="entry name" value="PRK02304.1-5"/>
    <property type="match status" value="1"/>
</dbReference>
<dbReference type="PANTHER" id="PTHR11776">
    <property type="entry name" value="ADENINE PHOSPHORIBOSYLTRANSFERASE"/>
    <property type="match status" value="1"/>
</dbReference>
<dbReference type="PANTHER" id="PTHR11776:SF7">
    <property type="entry name" value="PHOSPHORIBOSYLTRANSFERASE DOMAIN-CONTAINING PROTEIN"/>
    <property type="match status" value="1"/>
</dbReference>
<dbReference type="Pfam" id="PF00156">
    <property type="entry name" value="Pribosyltran"/>
    <property type="match status" value="1"/>
</dbReference>
<dbReference type="SUPFAM" id="SSF53271">
    <property type="entry name" value="PRTase-like"/>
    <property type="match status" value="1"/>
</dbReference>
<dbReference type="PROSITE" id="PS00103">
    <property type="entry name" value="PUR_PYR_PR_TRANSFER"/>
    <property type="match status" value="1"/>
</dbReference>